<keyword id="KW-0456">Lyase</keyword>
<keyword id="KW-0658">Purine biosynthesis</keyword>
<reference key="1">
    <citation type="journal article" date="2001" name="Lancet">
        <title>Whole genome sequencing of meticillin-resistant Staphylococcus aureus.</title>
        <authorList>
            <person name="Kuroda M."/>
            <person name="Ohta T."/>
            <person name="Uchiyama I."/>
            <person name="Baba T."/>
            <person name="Yuzawa H."/>
            <person name="Kobayashi I."/>
            <person name="Cui L."/>
            <person name="Oguchi A."/>
            <person name="Aoki K."/>
            <person name="Nagai Y."/>
            <person name="Lian J.-Q."/>
            <person name="Ito T."/>
            <person name="Kanamori M."/>
            <person name="Matsumaru H."/>
            <person name="Maruyama A."/>
            <person name="Murakami H."/>
            <person name="Hosoyama A."/>
            <person name="Mizutani-Ui Y."/>
            <person name="Takahashi N.K."/>
            <person name="Sawano T."/>
            <person name="Inoue R."/>
            <person name="Kaito C."/>
            <person name="Sekimizu K."/>
            <person name="Hirakawa H."/>
            <person name="Kuhara S."/>
            <person name="Goto S."/>
            <person name="Yabuzaki J."/>
            <person name="Kanehisa M."/>
            <person name="Yamashita A."/>
            <person name="Oshima K."/>
            <person name="Furuya K."/>
            <person name="Yoshino C."/>
            <person name="Shiba T."/>
            <person name="Hattori M."/>
            <person name="Ogasawara N."/>
            <person name="Hayashi H."/>
            <person name="Hiramatsu K."/>
        </authorList>
    </citation>
    <scope>NUCLEOTIDE SEQUENCE [LARGE SCALE GENOMIC DNA]</scope>
    <source>
        <strain>N315</strain>
    </source>
</reference>
<reference key="2">
    <citation type="submission" date="2005-11" db="UniProtKB">
        <title>Shotgun proteomic analysis of total protein extract of S. aureus S30 versus N315.</title>
        <authorList>
            <person name="Stenz L."/>
        </authorList>
    </citation>
    <scope>IDENTIFICATION BY MASS SPECTROMETRY</scope>
</reference>
<reference key="3">
    <citation type="submission" date="2007-10" db="UniProtKB">
        <title>Shotgun proteomic analysis of total and membrane protein extracts of S. aureus strain N315.</title>
        <authorList>
            <person name="Vaezzadeh A.R."/>
            <person name="Deshusses J."/>
            <person name="Lescuyer P."/>
            <person name="Hochstrasser D.F."/>
        </authorList>
    </citation>
    <scope>IDENTIFICATION BY MASS SPECTROMETRY [LARGE SCALE ANALYSIS]</scope>
    <source>
        <strain>N315</strain>
    </source>
</reference>
<feature type="chain" id="PRO_0000259979" description="Adenylosuccinate lyase">
    <location>
        <begin position="1"/>
        <end position="431"/>
    </location>
</feature>
<feature type="active site" description="Proton donor/acceptor" evidence="2">
    <location>
        <position position="141"/>
    </location>
</feature>
<feature type="active site" description="Proton donor/acceptor" evidence="2">
    <location>
        <position position="262"/>
    </location>
</feature>
<feature type="binding site" evidence="2">
    <location>
        <begin position="4"/>
        <end position="5"/>
    </location>
    <ligand>
        <name>N(6)-(1,2-dicarboxyethyl)-AMP</name>
        <dbReference type="ChEBI" id="CHEBI:57567"/>
    </ligand>
</feature>
<feature type="binding site" evidence="2">
    <location>
        <begin position="67"/>
        <end position="69"/>
    </location>
    <ligand>
        <name>N(6)-(1,2-dicarboxyethyl)-AMP</name>
        <dbReference type="ChEBI" id="CHEBI:57567"/>
    </ligand>
</feature>
<feature type="binding site" evidence="2">
    <location>
        <begin position="93"/>
        <end position="94"/>
    </location>
    <ligand>
        <name>N(6)-(1,2-dicarboxyethyl)-AMP</name>
        <dbReference type="ChEBI" id="CHEBI:57567"/>
    </ligand>
</feature>
<feature type="binding site" evidence="2">
    <location>
        <position position="212"/>
    </location>
    <ligand>
        <name>N(6)-(1,2-dicarboxyethyl)-AMP</name>
        <dbReference type="ChEBI" id="CHEBI:57567"/>
    </ligand>
</feature>
<feature type="binding site" evidence="2">
    <location>
        <position position="263"/>
    </location>
    <ligand>
        <name>N(6)-(1,2-dicarboxyethyl)-AMP</name>
        <dbReference type="ChEBI" id="CHEBI:57567"/>
    </ligand>
</feature>
<feature type="binding site" evidence="2">
    <location>
        <begin position="268"/>
        <end position="270"/>
    </location>
    <ligand>
        <name>N(6)-(1,2-dicarboxyethyl)-AMP</name>
        <dbReference type="ChEBI" id="CHEBI:57567"/>
    </ligand>
</feature>
<feature type="binding site" evidence="2">
    <location>
        <position position="276"/>
    </location>
    <ligand>
        <name>N(6)-(1,2-dicarboxyethyl)-AMP</name>
        <dbReference type="ChEBI" id="CHEBI:57567"/>
    </ligand>
</feature>
<feature type="binding site" evidence="2">
    <location>
        <begin position="307"/>
        <end position="311"/>
    </location>
    <ligand>
        <name>N(6)-(1,2-dicarboxyethyl)-AMP</name>
        <dbReference type="ChEBI" id="CHEBI:57567"/>
    </ligand>
</feature>
<evidence type="ECO:0000250" key="1"/>
<evidence type="ECO:0000250" key="2">
    <source>
        <dbReference type="UniProtKB" id="P0AB89"/>
    </source>
</evidence>
<evidence type="ECO:0000305" key="3"/>
<proteinExistence type="evidence at protein level"/>
<gene>
    <name type="primary">purB</name>
    <name type="ordered locus">SA1724</name>
</gene>
<organism>
    <name type="scientific">Staphylococcus aureus (strain N315)</name>
    <dbReference type="NCBI Taxonomy" id="158879"/>
    <lineage>
        <taxon>Bacteria</taxon>
        <taxon>Bacillati</taxon>
        <taxon>Bacillota</taxon>
        <taxon>Bacilli</taxon>
        <taxon>Bacillales</taxon>
        <taxon>Staphylococcaceae</taxon>
        <taxon>Staphylococcus</taxon>
    </lineage>
</organism>
<name>PUR8_STAAN</name>
<sequence length="431" mass="49603">MIERYSREEMSNIWTDQNRYEAWLEVEILACEAWSELGHIPKADVQKIRQNAKVNVERAQEIEQETRHDVVAFTRQVSETLGEERKWVHYGLTSTDVVDTALSFVIKQANDIIEKDLERFIDVLAEKAKNYKYTLMMGRTHGVHAEPTTFGVKMALWYTEMQRNLQRFKQVREEIEVGKMSGAVGTFANIPPEIESYVCKHLGIGTAPVSTQTLQRDRHAYYIATLALIATSLEKFAVEIRNLQKTETREVEEAFAKGQKGSSAMPHKRNPIGSENITGISRVIRGYITTAYENVPLWHERDISHSSAERIMLPDVTIALDYALNRFTNIVDRLTVFEDNMRNNIDKTFGLIFSQRVLLALINKGMVREEAYDKVQPKAMISWETKTPFRELIEQDESITSVLTKEELDECFDPKHHLNQVDTIFERAGLA</sequence>
<dbReference type="EC" id="4.3.2.2" evidence="2"/>
<dbReference type="EMBL" id="BA000018">
    <property type="protein sequence ID" value="BAB42994.1"/>
    <property type="molecule type" value="Genomic_DNA"/>
</dbReference>
<dbReference type="PIR" id="C89979">
    <property type="entry name" value="C89979"/>
</dbReference>
<dbReference type="RefSeq" id="WP_000572878.1">
    <property type="nucleotide sequence ID" value="NC_002745.2"/>
</dbReference>
<dbReference type="SMR" id="Q7A4Q3"/>
<dbReference type="EnsemblBacteria" id="BAB42994">
    <property type="protein sequence ID" value="BAB42994"/>
    <property type="gene ID" value="BAB42994"/>
</dbReference>
<dbReference type="KEGG" id="sau:SA1724"/>
<dbReference type="HOGENOM" id="CLU_030949_0_1_9"/>
<dbReference type="UniPathway" id="UPA00074">
    <property type="reaction ID" value="UER00132"/>
</dbReference>
<dbReference type="UniPathway" id="UPA00075">
    <property type="reaction ID" value="UER00336"/>
</dbReference>
<dbReference type="GO" id="GO:0005829">
    <property type="term" value="C:cytosol"/>
    <property type="evidence" value="ECO:0007669"/>
    <property type="project" value="TreeGrafter"/>
</dbReference>
<dbReference type="GO" id="GO:0070626">
    <property type="term" value="F:(S)-2-(5-amino-1-(5-phospho-D-ribosyl)imidazole-4-carboxamido) succinate lyase (fumarate-forming) activity"/>
    <property type="evidence" value="ECO:0007669"/>
    <property type="project" value="TreeGrafter"/>
</dbReference>
<dbReference type="GO" id="GO:0004018">
    <property type="term" value="F:N6-(1,2-dicarboxyethyl)AMP AMP-lyase (fumarate-forming) activity"/>
    <property type="evidence" value="ECO:0007669"/>
    <property type="project" value="InterPro"/>
</dbReference>
<dbReference type="GO" id="GO:0044208">
    <property type="term" value="P:'de novo' AMP biosynthetic process"/>
    <property type="evidence" value="ECO:0007669"/>
    <property type="project" value="UniProtKB-UniPathway"/>
</dbReference>
<dbReference type="GO" id="GO:0006189">
    <property type="term" value="P:'de novo' IMP biosynthetic process"/>
    <property type="evidence" value="ECO:0007669"/>
    <property type="project" value="UniProtKB-UniPathway"/>
</dbReference>
<dbReference type="CDD" id="cd01360">
    <property type="entry name" value="Adenylsuccinate_lyase_1"/>
    <property type="match status" value="1"/>
</dbReference>
<dbReference type="FunFam" id="1.10.275.10:FF:000006">
    <property type="entry name" value="Adenylosuccinate lyase"/>
    <property type="match status" value="1"/>
</dbReference>
<dbReference type="FunFam" id="1.10.40.30:FF:000007">
    <property type="entry name" value="Adenylosuccinate lyase"/>
    <property type="match status" value="1"/>
</dbReference>
<dbReference type="FunFam" id="1.20.200.10:FF:000008">
    <property type="entry name" value="Adenylosuccinate lyase"/>
    <property type="match status" value="1"/>
</dbReference>
<dbReference type="Gene3D" id="1.10.40.30">
    <property type="entry name" value="Fumarase/aspartase (C-terminal domain)"/>
    <property type="match status" value="1"/>
</dbReference>
<dbReference type="Gene3D" id="1.20.200.10">
    <property type="entry name" value="Fumarase/aspartase (Central domain)"/>
    <property type="match status" value="1"/>
</dbReference>
<dbReference type="Gene3D" id="1.10.275.10">
    <property type="entry name" value="Fumarase/aspartase (N-terminal domain)"/>
    <property type="match status" value="1"/>
</dbReference>
<dbReference type="InterPro" id="IPR019468">
    <property type="entry name" value="AdenyloSucc_lyase_C"/>
</dbReference>
<dbReference type="InterPro" id="IPR024083">
    <property type="entry name" value="Fumarase/histidase_N"/>
</dbReference>
<dbReference type="InterPro" id="IPR020557">
    <property type="entry name" value="Fumarate_lyase_CS"/>
</dbReference>
<dbReference type="InterPro" id="IPR000362">
    <property type="entry name" value="Fumarate_lyase_fam"/>
</dbReference>
<dbReference type="InterPro" id="IPR022761">
    <property type="entry name" value="Fumarate_lyase_N"/>
</dbReference>
<dbReference type="InterPro" id="IPR008948">
    <property type="entry name" value="L-Aspartase-like"/>
</dbReference>
<dbReference type="InterPro" id="IPR004769">
    <property type="entry name" value="Pur_lyase"/>
</dbReference>
<dbReference type="NCBIfam" id="TIGR00928">
    <property type="entry name" value="purB"/>
    <property type="match status" value="1"/>
</dbReference>
<dbReference type="PANTHER" id="PTHR43172">
    <property type="entry name" value="ADENYLOSUCCINATE LYASE"/>
    <property type="match status" value="1"/>
</dbReference>
<dbReference type="PANTHER" id="PTHR43172:SF1">
    <property type="entry name" value="ADENYLOSUCCINATE LYASE"/>
    <property type="match status" value="1"/>
</dbReference>
<dbReference type="Pfam" id="PF10397">
    <property type="entry name" value="ADSL_C"/>
    <property type="match status" value="1"/>
</dbReference>
<dbReference type="Pfam" id="PF00206">
    <property type="entry name" value="Lyase_1"/>
    <property type="match status" value="1"/>
</dbReference>
<dbReference type="PRINTS" id="PR00145">
    <property type="entry name" value="ARGSUCLYASE"/>
</dbReference>
<dbReference type="PRINTS" id="PR00149">
    <property type="entry name" value="FUMRATELYASE"/>
</dbReference>
<dbReference type="SMART" id="SM00998">
    <property type="entry name" value="ADSL_C"/>
    <property type="match status" value="1"/>
</dbReference>
<dbReference type="SUPFAM" id="SSF48557">
    <property type="entry name" value="L-aspartase-like"/>
    <property type="match status" value="1"/>
</dbReference>
<dbReference type="PROSITE" id="PS00163">
    <property type="entry name" value="FUMARATE_LYASES"/>
    <property type="match status" value="1"/>
</dbReference>
<accession>Q7A4Q3</accession>
<comment type="function">
    <text evidence="2">Catalyzes two reactions in de novo purine nucleotide biosynthesis. Catalyzes the breakdown of 5-aminoimidazole- (N-succinylocarboxamide) ribotide (SAICAR or 2-[5-amino-1-(5-phospho-beta-D-ribosyl)imidazole-4-carboxamido]succinate) to 5-aminoimidazole-4-carboxamide ribotide (AICAR or 5-amino-1-(5-phospho-beta-D-ribosyl)imidazole-4-carboxamide) and fumarate, and of adenylosuccinate (ADS or N(6)-(1,2-dicarboxyethyl)-AMP) to adenosine monophosphate (AMP) and fumarate.</text>
</comment>
<comment type="catalytic activity">
    <reaction evidence="2">
        <text>N(6)-(1,2-dicarboxyethyl)-AMP = fumarate + AMP</text>
        <dbReference type="Rhea" id="RHEA:16853"/>
        <dbReference type="ChEBI" id="CHEBI:29806"/>
        <dbReference type="ChEBI" id="CHEBI:57567"/>
        <dbReference type="ChEBI" id="CHEBI:456215"/>
        <dbReference type="EC" id="4.3.2.2"/>
    </reaction>
    <physiologicalReaction direction="left-to-right" evidence="2">
        <dbReference type="Rhea" id="RHEA:16854"/>
    </physiologicalReaction>
</comment>
<comment type="catalytic activity">
    <reaction evidence="2">
        <text>(2S)-2-[5-amino-1-(5-phospho-beta-D-ribosyl)imidazole-4-carboxamido]succinate = 5-amino-1-(5-phospho-beta-D-ribosyl)imidazole-4-carboxamide + fumarate</text>
        <dbReference type="Rhea" id="RHEA:23920"/>
        <dbReference type="ChEBI" id="CHEBI:29806"/>
        <dbReference type="ChEBI" id="CHEBI:58443"/>
        <dbReference type="ChEBI" id="CHEBI:58475"/>
        <dbReference type="EC" id="4.3.2.2"/>
    </reaction>
    <physiologicalReaction direction="left-to-right" evidence="2">
        <dbReference type="Rhea" id="RHEA:23921"/>
    </physiologicalReaction>
</comment>
<comment type="pathway">
    <text>Purine metabolism; AMP biosynthesis via de novo pathway; AMP from IMP: step 2/2.</text>
</comment>
<comment type="pathway">
    <text>Purine metabolism; IMP biosynthesis via de novo pathway; 5-amino-1-(5-phospho-D-ribosyl)imidazole-4-carboxamide from 5-amino-1-(5-phospho-D-ribosyl)imidazole-4-carboxylate: step 2/2.</text>
</comment>
<comment type="subunit">
    <text evidence="1">Homodimer and homotetramer. Residues from neighboring subunits contribute catalytic and substrate-binding residues to each active site (By similarity).</text>
</comment>
<comment type="similarity">
    <text evidence="3">Belongs to the lyase 1 family. Adenylosuccinate lyase subfamily.</text>
</comment>
<protein>
    <recommendedName>
        <fullName>Adenylosuccinate lyase</fullName>
        <shortName>ASL</shortName>
        <ecNumber evidence="2">4.3.2.2</ecNumber>
    </recommendedName>
    <alternativeName>
        <fullName>Adenylosuccinase</fullName>
        <shortName>ASase</shortName>
    </alternativeName>
</protein>